<feature type="chain" id="PRO_0000396582" description="Lon protease">
    <location>
        <begin position="1"/>
        <end position="833"/>
    </location>
</feature>
<feature type="domain" description="Lon N-terminal" evidence="3">
    <location>
        <begin position="3"/>
        <end position="198"/>
    </location>
</feature>
<feature type="domain" description="Lon proteolytic" evidence="2">
    <location>
        <begin position="627"/>
        <end position="808"/>
    </location>
</feature>
<feature type="active site" evidence="1">
    <location>
        <position position="714"/>
    </location>
</feature>
<feature type="active site" evidence="1">
    <location>
        <position position="757"/>
    </location>
</feature>
<feature type="binding site" evidence="1">
    <location>
        <begin position="390"/>
        <end position="397"/>
    </location>
    <ligand>
        <name>ATP</name>
        <dbReference type="ChEBI" id="CHEBI:30616"/>
    </ligand>
</feature>
<reference key="1">
    <citation type="journal article" date="2004" name="Genome Res.">
        <title>The complete genome and proteome of Mycoplasma mobile.</title>
        <authorList>
            <person name="Jaffe J.D."/>
            <person name="Stange-Thomann N."/>
            <person name="Smith C."/>
            <person name="DeCaprio D."/>
            <person name="Fisher S."/>
            <person name="Butler J."/>
            <person name="Calvo S."/>
            <person name="Elkins T."/>
            <person name="FitzGerald M.G."/>
            <person name="Hafez N."/>
            <person name="Kodira C.D."/>
            <person name="Major J."/>
            <person name="Wang S."/>
            <person name="Wilkinson J."/>
            <person name="Nicol R."/>
            <person name="Nusbaum C."/>
            <person name="Birren B."/>
            <person name="Berg H.C."/>
            <person name="Church G.M."/>
        </authorList>
    </citation>
    <scope>NUCLEOTIDE SEQUENCE [LARGE SCALE GENOMIC DNA]</scope>
    <source>
        <strain>ATCC 43663 / NCTC 11711 / 163 K</strain>
    </source>
</reference>
<protein>
    <recommendedName>
        <fullName evidence="1">Lon protease</fullName>
        <ecNumber evidence="1">3.4.21.53</ecNumber>
    </recommendedName>
    <alternativeName>
        <fullName evidence="1">ATP-dependent protease La</fullName>
    </alternativeName>
</protein>
<comment type="function">
    <text evidence="1">ATP-dependent serine protease that mediates the selective degradation of mutant and abnormal proteins as well as certain short-lived regulatory proteins. Required for cellular homeostasis and for survival from DNA damage and developmental changes induced by stress. Degrades polypeptides processively to yield small peptide fragments that are 5 to 10 amino acids long. Binds to DNA in a double-stranded, site-specific manner.</text>
</comment>
<comment type="catalytic activity">
    <reaction evidence="1">
        <text>Hydrolysis of proteins in presence of ATP.</text>
        <dbReference type="EC" id="3.4.21.53"/>
    </reaction>
</comment>
<comment type="subunit">
    <text evidence="1">Homohexamer. Organized in a ring with a central cavity.</text>
</comment>
<comment type="subcellular location">
    <subcellularLocation>
        <location evidence="1">Cytoplasm</location>
    </subcellularLocation>
</comment>
<comment type="induction">
    <text evidence="1">By heat shock.</text>
</comment>
<comment type="similarity">
    <text evidence="1">Belongs to the peptidase S16 family.</text>
</comment>
<organism>
    <name type="scientific">Mycoplasma mobile (strain ATCC 43663 / 163K / NCTC 11711)</name>
    <name type="common">Mesomycoplasma mobile</name>
    <dbReference type="NCBI Taxonomy" id="267748"/>
    <lineage>
        <taxon>Bacteria</taxon>
        <taxon>Bacillati</taxon>
        <taxon>Mycoplasmatota</taxon>
        <taxon>Mycoplasmoidales</taxon>
        <taxon>Metamycoplasmataceae</taxon>
        <taxon>Mesomycoplasma</taxon>
    </lineage>
</organism>
<sequence>MKYPFMATRGVITFIGNSSTIEVGRPLSLAAIDLAKSDFENKLVLIPQKNIKQNEIEFEKDLENVGILTKIKSIKILSNGNRKIIVEGVERIKLDSIEKDKNNNDIIANLSLYPVLKNENGSSETIIEKMQTSLNNIIESNLPLVANQELSKHESSERYTYILAHYLTMPFEKKFEIFAKKSLTEMLELIFSFLVELKNIQKLDVDLDKDIKKNLDSQQREYLLRERLKVIQKKLGDDENDEEEIEEKLNSKYGKEQYPEEVIKTIKNEKRRLKNMMSSSPEANTSRTYIEWLTNLPWRKVSVDKTNLVKSKEILDSYHYGLKEVKERIIEFLAVMINNNKKHPEDEKTKIQIPNSDYEINKNLFTKKNASDDTYSYKSSNNVPILALVGPPGTGKTSLAKAIAETLDRKFIKISLGGVKDEAEIRGHRRTYVGALPGKIIQAIKKAGVSNPVILLDEIDKMSSDYKGDPTSAMLEVLDPEQNVNFQDHYIELEYDLSKVLFIATANYYQNISAPLLDRVEIIELSSYTSLEKIRIARDYLIKKVLEQNSLEESQFKISDESLDFLIKHYTLEAGVRNLQRALDKLARKIVVKSLENKLEKDFVITSEEIVNLLGVIKYTDDFKENYERIGAVNGLAYTQYGGSTLSIEVTTFPNSKGGIKLTGQLKEVMQESAQIALAFVRSNAKKYEIDFNFEANQIHIHVPEGAVPKDGPSAGVTFTTAIISALKQIPVSHKVGMTGEITLRGKVLPIGGLKEKSLAAHKLGIKTVFIPNENNRNLVEVADEVKESIEFISVSDYDEIFENLFGKLSDNKKITSNSKIPKKDISKANPTH</sequence>
<accession>Q6KI22</accession>
<proteinExistence type="inferred from homology"/>
<gene>
    <name evidence="1" type="primary">lon</name>
    <name type="ordered locus">MMOB2680</name>
</gene>
<keyword id="KW-0067">ATP-binding</keyword>
<keyword id="KW-0963">Cytoplasm</keyword>
<keyword id="KW-0378">Hydrolase</keyword>
<keyword id="KW-0547">Nucleotide-binding</keyword>
<keyword id="KW-0645">Protease</keyword>
<keyword id="KW-1185">Reference proteome</keyword>
<keyword id="KW-0720">Serine protease</keyword>
<keyword id="KW-0346">Stress response</keyword>
<evidence type="ECO:0000255" key="1">
    <source>
        <dbReference type="HAMAP-Rule" id="MF_01973"/>
    </source>
</evidence>
<evidence type="ECO:0000255" key="2">
    <source>
        <dbReference type="PROSITE-ProRule" id="PRU01122"/>
    </source>
</evidence>
<evidence type="ECO:0000255" key="3">
    <source>
        <dbReference type="PROSITE-ProRule" id="PRU01123"/>
    </source>
</evidence>
<dbReference type="EC" id="3.4.21.53" evidence="1"/>
<dbReference type="EMBL" id="AE017308">
    <property type="protein sequence ID" value="AAT27754.1"/>
    <property type="molecule type" value="Genomic_DNA"/>
</dbReference>
<dbReference type="RefSeq" id="WP_011264788.1">
    <property type="nucleotide sequence ID" value="NC_006908.1"/>
</dbReference>
<dbReference type="SMR" id="Q6KI22"/>
<dbReference type="STRING" id="267748.MMOB2680"/>
<dbReference type="MEROPS" id="S16.001"/>
<dbReference type="KEGG" id="mmo:MMOB2680"/>
<dbReference type="eggNOG" id="COG0466">
    <property type="taxonomic scope" value="Bacteria"/>
</dbReference>
<dbReference type="HOGENOM" id="CLU_004109_4_3_14"/>
<dbReference type="OrthoDB" id="9803599at2"/>
<dbReference type="Proteomes" id="UP000009072">
    <property type="component" value="Chromosome"/>
</dbReference>
<dbReference type="GO" id="GO:0005737">
    <property type="term" value="C:cytoplasm"/>
    <property type="evidence" value="ECO:0007669"/>
    <property type="project" value="UniProtKB-SubCell"/>
</dbReference>
<dbReference type="GO" id="GO:0005524">
    <property type="term" value="F:ATP binding"/>
    <property type="evidence" value="ECO:0007669"/>
    <property type="project" value="UniProtKB-UniRule"/>
</dbReference>
<dbReference type="GO" id="GO:0016887">
    <property type="term" value="F:ATP hydrolysis activity"/>
    <property type="evidence" value="ECO:0007669"/>
    <property type="project" value="UniProtKB-UniRule"/>
</dbReference>
<dbReference type="GO" id="GO:0004176">
    <property type="term" value="F:ATP-dependent peptidase activity"/>
    <property type="evidence" value="ECO:0007669"/>
    <property type="project" value="UniProtKB-UniRule"/>
</dbReference>
<dbReference type="GO" id="GO:0043565">
    <property type="term" value="F:sequence-specific DNA binding"/>
    <property type="evidence" value="ECO:0007669"/>
    <property type="project" value="UniProtKB-UniRule"/>
</dbReference>
<dbReference type="GO" id="GO:0004252">
    <property type="term" value="F:serine-type endopeptidase activity"/>
    <property type="evidence" value="ECO:0007669"/>
    <property type="project" value="UniProtKB-UniRule"/>
</dbReference>
<dbReference type="GO" id="GO:0034605">
    <property type="term" value="P:cellular response to heat"/>
    <property type="evidence" value="ECO:0007669"/>
    <property type="project" value="UniProtKB-UniRule"/>
</dbReference>
<dbReference type="GO" id="GO:0006515">
    <property type="term" value="P:protein quality control for misfolded or incompletely synthesized proteins"/>
    <property type="evidence" value="ECO:0007669"/>
    <property type="project" value="UniProtKB-UniRule"/>
</dbReference>
<dbReference type="CDD" id="cd19500">
    <property type="entry name" value="RecA-like_Lon"/>
    <property type="match status" value="1"/>
</dbReference>
<dbReference type="FunFam" id="3.40.50.300:FF:000021">
    <property type="entry name" value="Lon protease homolog"/>
    <property type="match status" value="1"/>
</dbReference>
<dbReference type="Gene3D" id="1.10.8.60">
    <property type="match status" value="1"/>
</dbReference>
<dbReference type="Gene3D" id="1.20.5.5270">
    <property type="match status" value="1"/>
</dbReference>
<dbReference type="Gene3D" id="1.20.58.1480">
    <property type="match status" value="1"/>
</dbReference>
<dbReference type="Gene3D" id="3.30.230.10">
    <property type="match status" value="1"/>
</dbReference>
<dbReference type="Gene3D" id="2.30.130.40">
    <property type="entry name" value="LON domain-like"/>
    <property type="match status" value="1"/>
</dbReference>
<dbReference type="Gene3D" id="3.40.50.300">
    <property type="entry name" value="P-loop containing nucleotide triphosphate hydrolases"/>
    <property type="match status" value="1"/>
</dbReference>
<dbReference type="HAMAP" id="MF_01973">
    <property type="entry name" value="lon_bact"/>
    <property type="match status" value="1"/>
</dbReference>
<dbReference type="InterPro" id="IPR003593">
    <property type="entry name" value="AAA+_ATPase"/>
</dbReference>
<dbReference type="InterPro" id="IPR003959">
    <property type="entry name" value="ATPase_AAA_core"/>
</dbReference>
<dbReference type="InterPro" id="IPR027543">
    <property type="entry name" value="Lon_bac"/>
</dbReference>
<dbReference type="InterPro" id="IPR004815">
    <property type="entry name" value="Lon_bac/euk-typ"/>
</dbReference>
<dbReference type="InterPro" id="IPR054594">
    <property type="entry name" value="Lon_lid"/>
</dbReference>
<dbReference type="InterPro" id="IPR008269">
    <property type="entry name" value="Lon_proteolytic"/>
</dbReference>
<dbReference type="InterPro" id="IPR027065">
    <property type="entry name" value="Lon_Prtase"/>
</dbReference>
<dbReference type="InterPro" id="IPR003111">
    <property type="entry name" value="Lon_prtase_N"/>
</dbReference>
<dbReference type="InterPro" id="IPR046336">
    <property type="entry name" value="Lon_prtase_N_sf"/>
</dbReference>
<dbReference type="InterPro" id="IPR027417">
    <property type="entry name" value="P-loop_NTPase"/>
</dbReference>
<dbReference type="InterPro" id="IPR015947">
    <property type="entry name" value="PUA-like_sf"/>
</dbReference>
<dbReference type="InterPro" id="IPR020568">
    <property type="entry name" value="Ribosomal_Su5_D2-typ_SF"/>
</dbReference>
<dbReference type="InterPro" id="IPR014721">
    <property type="entry name" value="Ribsml_uS5_D2-typ_fold_subgr"/>
</dbReference>
<dbReference type="NCBIfam" id="TIGR00763">
    <property type="entry name" value="lon"/>
    <property type="match status" value="1"/>
</dbReference>
<dbReference type="PANTHER" id="PTHR43718">
    <property type="entry name" value="LON PROTEASE"/>
    <property type="match status" value="1"/>
</dbReference>
<dbReference type="PANTHER" id="PTHR43718:SF2">
    <property type="entry name" value="LON PROTEASE HOMOLOG, MITOCHONDRIAL"/>
    <property type="match status" value="1"/>
</dbReference>
<dbReference type="Pfam" id="PF00004">
    <property type="entry name" value="AAA"/>
    <property type="match status" value="1"/>
</dbReference>
<dbReference type="Pfam" id="PF05362">
    <property type="entry name" value="Lon_C"/>
    <property type="match status" value="1"/>
</dbReference>
<dbReference type="Pfam" id="PF22667">
    <property type="entry name" value="Lon_lid"/>
    <property type="match status" value="1"/>
</dbReference>
<dbReference type="Pfam" id="PF02190">
    <property type="entry name" value="LON_substr_bdg"/>
    <property type="match status" value="1"/>
</dbReference>
<dbReference type="PIRSF" id="PIRSF001174">
    <property type="entry name" value="Lon_proteas"/>
    <property type="match status" value="1"/>
</dbReference>
<dbReference type="PRINTS" id="PR00830">
    <property type="entry name" value="ENDOLAPTASE"/>
</dbReference>
<dbReference type="SMART" id="SM00382">
    <property type="entry name" value="AAA"/>
    <property type="match status" value="1"/>
</dbReference>
<dbReference type="SMART" id="SM00464">
    <property type="entry name" value="LON"/>
    <property type="match status" value="1"/>
</dbReference>
<dbReference type="SUPFAM" id="SSF52540">
    <property type="entry name" value="P-loop containing nucleoside triphosphate hydrolases"/>
    <property type="match status" value="1"/>
</dbReference>
<dbReference type="SUPFAM" id="SSF88697">
    <property type="entry name" value="PUA domain-like"/>
    <property type="match status" value="1"/>
</dbReference>
<dbReference type="SUPFAM" id="SSF54211">
    <property type="entry name" value="Ribosomal protein S5 domain 2-like"/>
    <property type="match status" value="1"/>
</dbReference>
<dbReference type="PROSITE" id="PS51787">
    <property type="entry name" value="LON_N"/>
    <property type="match status" value="1"/>
</dbReference>
<dbReference type="PROSITE" id="PS51786">
    <property type="entry name" value="LON_PROTEOLYTIC"/>
    <property type="match status" value="1"/>
</dbReference>
<name>LON_MYCM1</name>